<geneLocation type="chloroplast"/>
<gene>
    <name evidence="1" type="primary">rps18</name>
    <name type="ordered locus">LopeCp063</name>
</gene>
<reference key="1">
    <citation type="journal article" date="2008" name="PLoS ONE">
        <title>An optimized chloroplast DNA extraction protocol for grasses (Poaceae) proves suitable for whole plastid genome sequencing and SNP detection.</title>
        <authorList>
            <person name="Diekmann K."/>
            <person name="Hodkinson T.R."/>
            <person name="Fricke E."/>
            <person name="Barth S."/>
        </authorList>
    </citation>
    <scope>NUCLEOTIDE SEQUENCE [LARGE SCALE GENOMIC DNA]</scope>
    <source>
        <strain>cv. Cashel</strain>
    </source>
</reference>
<comment type="subunit">
    <text evidence="1">Part of the 30S ribosomal subunit.</text>
</comment>
<comment type="subcellular location">
    <subcellularLocation>
        <location>Plastid</location>
        <location>Chloroplast</location>
    </subcellularLocation>
</comment>
<comment type="similarity">
    <text evidence="1">Belongs to the bacterial ribosomal protein bS18 family.</text>
</comment>
<dbReference type="EMBL" id="AM777385">
    <property type="protein sequence ID" value="CAO85997.1"/>
    <property type="molecule type" value="Genomic_DNA"/>
</dbReference>
<dbReference type="RefSeq" id="YP_001531304.1">
    <property type="nucleotide sequence ID" value="NC_009950.1"/>
</dbReference>
<dbReference type="SMR" id="A8Y9A8"/>
<dbReference type="GeneID" id="5696603"/>
<dbReference type="KEGG" id="lper:5696603"/>
<dbReference type="GO" id="GO:0009507">
    <property type="term" value="C:chloroplast"/>
    <property type="evidence" value="ECO:0007669"/>
    <property type="project" value="UniProtKB-SubCell"/>
</dbReference>
<dbReference type="GO" id="GO:0005763">
    <property type="term" value="C:mitochondrial small ribosomal subunit"/>
    <property type="evidence" value="ECO:0007669"/>
    <property type="project" value="TreeGrafter"/>
</dbReference>
<dbReference type="GO" id="GO:0070181">
    <property type="term" value="F:small ribosomal subunit rRNA binding"/>
    <property type="evidence" value="ECO:0007669"/>
    <property type="project" value="TreeGrafter"/>
</dbReference>
<dbReference type="GO" id="GO:0003735">
    <property type="term" value="F:structural constituent of ribosome"/>
    <property type="evidence" value="ECO:0007669"/>
    <property type="project" value="InterPro"/>
</dbReference>
<dbReference type="GO" id="GO:0006412">
    <property type="term" value="P:translation"/>
    <property type="evidence" value="ECO:0007669"/>
    <property type="project" value="UniProtKB-UniRule"/>
</dbReference>
<dbReference type="FunFam" id="4.10.640.10:FF:000002">
    <property type="entry name" value="30S ribosomal protein S18, chloroplastic"/>
    <property type="match status" value="1"/>
</dbReference>
<dbReference type="Gene3D" id="4.10.640.10">
    <property type="entry name" value="Ribosomal protein S18"/>
    <property type="match status" value="1"/>
</dbReference>
<dbReference type="HAMAP" id="MF_00270">
    <property type="entry name" value="Ribosomal_bS18"/>
    <property type="match status" value="1"/>
</dbReference>
<dbReference type="InterPro" id="IPR001648">
    <property type="entry name" value="Ribosomal_bS18"/>
</dbReference>
<dbReference type="InterPro" id="IPR018275">
    <property type="entry name" value="Ribosomal_bS18_CS"/>
</dbReference>
<dbReference type="InterPro" id="IPR036870">
    <property type="entry name" value="Ribosomal_bS18_sf"/>
</dbReference>
<dbReference type="NCBIfam" id="TIGR00165">
    <property type="entry name" value="S18"/>
    <property type="match status" value="1"/>
</dbReference>
<dbReference type="PANTHER" id="PTHR13479">
    <property type="entry name" value="30S RIBOSOMAL PROTEIN S18"/>
    <property type="match status" value="1"/>
</dbReference>
<dbReference type="PANTHER" id="PTHR13479:SF40">
    <property type="entry name" value="SMALL RIBOSOMAL SUBUNIT PROTEIN BS18M"/>
    <property type="match status" value="1"/>
</dbReference>
<dbReference type="Pfam" id="PF01084">
    <property type="entry name" value="Ribosomal_S18"/>
    <property type="match status" value="1"/>
</dbReference>
<dbReference type="PRINTS" id="PR00974">
    <property type="entry name" value="RIBOSOMALS18"/>
</dbReference>
<dbReference type="SUPFAM" id="SSF46911">
    <property type="entry name" value="Ribosomal protein S18"/>
    <property type="match status" value="1"/>
</dbReference>
<dbReference type="PROSITE" id="PS00057">
    <property type="entry name" value="RIBOSOMAL_S18"/>
    <property type="match status" value="1"/>
</dbReference>
<keyword id="KW-0150">Chloroplast</keyword>
<keyword id="KW-0934">Plastid</keyword>
<keyword id="KW-0687">Ribonucleoprotein</keyword>
<keyword id="KW-0689">Ribosomal protein</keyword>
<keyword id="KW-0694">RNA-binding</keyword>
<keyword id="KW-0699">rRNA-binding</keyword>
<accession>A8Y9A8</accession>
<feature type="chain" id="PRO_0000345594" description="Small ribosomal subunit protein bS18c">
    <location>
        <begin position="1"/>
        <end position="156"/>
    </location>
</feature>
<feature type="region of interest" description="Disordered" evidence="2">
    <location>
        <begin position="1"/>
        <end position="54"/>
    </location>
</feature>
<feature type="compositionally biased region" description="Basic residues" evidence="2">
    <location>
        <begin position="13"/>
        <end position="48"/>
    </location>
</feature>
<evidence type="ECO:0000255" key="1">
    <source>
        <dbReference type="HAMAP-Rule" id="MF_00270"/>
    </source>
</evidence>
<evidence type="ECO:0000256" key="2">
    <source>
        <dbReference type="SAM" id="MobiDB-lite"/>
    </source>
</evidence>
<evidence type="ECO:0000305" key="3"/>
<sequence>MYTSKQPFLKSKQPFRKSKQPFRKSKQPFRKFKKPFRKSKQPFRRRPRIGPGDRIDYRNMSLINRFISEQGKILSRRINRLTLKQQRLITLAIKQARILSFLPFRNYENEKQFQAQSISIITGSRPRKNRHIPQLTEKYNSNRNLRNNNRNLSSDC</sequence>
<organism>
    <name type="scientific">Lolium perenne</name>
    <name type="common">Perennial ryegrass</name>
    <dbReference type="NCBI Taxonomy" id="4522"/>
    <lineage>
        <taxon>Eukaryota</taxon>
        <taxon>Viridiplantae</taxon>
        <taxon>Streptophyta</taxon>
        <taxon>Embryophyta</taxon>
        <taxon>Tracheophyta</taxon>
        <taxon>Spermatophyta</taxon>
        <taxon>Magnoliopsida</taxon>
        <taxon>Liliopsida</taxon>
        <taxon>Poales</taxon>
        <taxon>Poaceae</taxon>
        <taxon>BOP clade</taxon>
        <taxon>Pooideae</taxon>
        <taxon>Poodae</taxon>
        <taxon>Poeae</taxon>
        <taxon>Poeae Chloroplast Group 2 (Poeae type)</taxon>
        <taxon>Loliodinae</taxon>
        <taxon>Loliinae</taxon>
        <taxon>Lolium</taxon>
    </lineage>
</organism>
<protein>
    <recommendedName>
        <fullName evidence="1">Small ribosomal subunit protein bS18c</fullName>
    </recommendedName>
    <alternativeName>
        <fullName evidence="3">30S ribosomal protein S18, chloroplastic</fullName>
    </alternativeName>
</protein>
<proteinExistence type="inferred from homology"/>
<name>RR18_LOLPR</name>